<reference key="1">
    <citation type="submission" date="2018-06" db="EMBL/GenBank/DDBJ databases">
        <title>Duplications and functional specialization force distinct evolution of isoflavonoid biosynthetic genes in legumes.</title>
        <authorList>
            <person name="Jiao Y."/>
        </authorList>
    </citation>
    <scope>NUCLEOTIDE SEQUENCE [MRNA]</scope>
</reference>
<reference key="2">
    <citation type="journal article" date="2010" name="Nature">
        <title>Genome sequence of the palaeopolyploid soybean.</title>
        <authorList>
            <person name="Schmutz J."/>
            <person name="Cannon S.B."/>
            <person name="Schlueter J."/>
            <person name="Ma J."/>
            <person name="Mitros T."/>
            <person name="Nelson W."/>
            <person name="Hyten D.L."/>
            <person name="Song Q."/>
            <person name="Thelen J.J."/>
            <person name="Cheng J."/>
            <person name="Xu D."/>
            <person name="Hellsten U."/>
            <person name="May G.D."/>
            <person name="Yu Y."/>
            <person name="Sakurai T."/>
            <person name="Umezawa T."/>
            <person name="Bhattacharyya M.K."/>
            <person name="Sandhu D."/>
            <person name="Valliyodan B."/>
            <person name="Lindquist E."/>
            <person name="Peto M."/>
            <person name="Grant D."/>
            <person name="Shu S."/>
            <person name="Goodstein D."/>
            <person name="Barry K."/>
            <person name="Futrell-Griggs M."/>
            <person name="Abernathy B."/>
            <person name="Du J."/>
            <person name="Tian Z."/>
            <person name="Zhu L."/>
            <person name="Gill N."/>
            <person name="Joshi T."/>
            <person name="Libault M."/>
            <person name="Sethuraman A."/>
            <person name="Zhang X.-C."/>
            <person name="Shinozaki K."/>
            <person name="Nguyen H.T."/>
            <person name="Wing R.A."/>
            <person name="Cregan P."/>
            <person name="Specht J."/>
            <person name="Grimwood J."/>
            <person name="Rokhsar D."/>
            <person name="Stacey G."/>
            <person name="Shoemaker R.C."/>
            <person name="Jackson S.A."/>
        </authorList>
    </citation>
    <scope>NUCLEOTIDE SEQUENCE [LARGE SCALE GENOMIC DNA]</scope>
    <source>
        <strain>cv. Williams 82</strain>
    </source>
</reference>
<reference key="3">
    <citation type="journal article" date="2017" name="Plant Cell Physiol.">
        <title>The missing link in leguminous pterocarpan biosynthesis is a dirigent domain-containing protein with isoflavanol dehydratase activity.</title>
        <authorList>
            <person name="Uchida K."/>
            <person name="Akashi T."/>
            <person name="Aoki T."/>
        </authorList>
    </citation>
    <scope>FUNCTION</scope>
    <scope>CATALYTIC ACTIVITY</scope>
</reference>
<keyword id="KW-0521">NADP</keyword>
<keyword id="KW-0560">Oxidoreductase</keyword>
<keyword id="KW-0611">Plant defense</keyword>
<keyword id="KW-1185">Reference proteome</keyword>
<proteinExistence type="evidence at protein level"/>
<name>IFR_SOYBN</name>
<protein>
    <recommendedName>
        <fullName evidence="4">Isoflavone reductase</fullName>
        <shortName evidence="4">GmIFR</shortName>
        <ecNumber evidence="3">1.3.1.45</ecNumber>
    </recommendedName>
    <alternativeName>
        <fullName evidence="5">2'-hydroxyisoflavone reductase</fullName>
    </alternativeName>
    <alternativeName>
        <fullName evidence="5">NADPH:isoflavone oxidoreductase</fullName>
    </alternativeName>
</protein>
<dbReference type="EC" id="1.3.1.45" evidence="3"/>
<dbReference type="EMBL" id="MH450263">
    <property type="protein sequence ID" value="QBF58795.1"/>
    <property type="molecule type" value="mRNA"/>
</dbReference>
<dbReference type="EMBL" id="CM000844">
    <property type="protein sequence ID" value="KRH28705.1"/>
    <property type="molecule type" value="Genomic_DNA"/>
</dbReference>
<dbReference type="EMBL" id="CM000844">
    <property type="protein sequence ID" value="KRH28706.1"/>
    <property type="status" value="ALT_SEQ"/>
    <property type="molecule type" value="Genomic_DNA"/>
</dbReference>
<dbReference type="RefSeq" id="NP_001276127.2">
    <property type="nucleotide sequence ID" value="NM_001289198.2"/>
</dbReference>
<dbReference type="SMR" id="I1LHU6"/>
<dbReference type="STRING" id="3847.I1LHU6"/>
<dbReference type="PaxDb" id="3847-GLYMA11G07510.1"/>
<dbReference type="EnsemblPlants" id="KRH28705">
    <property type="protein sequence ID" value="KRH28705"/>
    <property type="gene ID" value="GLYMA_11G070500"/>
</dbReference>
<dbReference type="GeneID" id="100781316"/>
<dbReference type="Gramene" id="KRH28705">
    <property type="protein sequence ID" value="KRH28705"/>
    <property type="gene ID" value="GLYMA_11G070500"/>
</dbReference>
<dbReference type="KEGG" id="gmx:100781316"/>
<dbReference type="eggNOG" id="ENOG502QPMY">
    <property type="taxonomic scope" value="Eukaryota"/>
</dbReference>
<dbReference type="HOGENOM" id="CLU_060833_0_1_1"/>
<dbReference type="InParanoid" id="I1LHU6"/>
<dbReference type="OrthoDB" id="419598at2759"/>
<dbReference type="Proteomes" id="UP000008827">
    <property type="component" value="Chromosome 11"/>
</dbReference>
<dbReference type="ExpressionAtlas" id="I1LHU6">
    <property type="expression patterns" value="baseline and differential"/>
</dbReference>
<dbReference type="GO" id="GO:0047526">
    <property type="term" value="F:2'-hydroxyisoflavone reductase activity"/>
    <property type="evidence" value="ECO:0007669"/>
    <property type="project" value="UniProtKB-EC"/>
</dbReference>
<dbReference type="GO" id="GO:0006952">
    <property type="term" value="P:defense response"/>
    <property type="evidence" value="ECO:0007669"/>
    <property type="project" value="UniProtKB-KW"/>
</dbReference>
<dbReference type="GO" id="GO:0009807">
    <property type="term" value="P:lignan biosynthetic process"/>
    <property type="evidence" value="ECO:0007669"/>
    <property type="project" value="UniProtKB-ARBA"/>
</dbReference>
<dbReference type="CDD" id="cd05259">
    <property type="entry name" value="PCBER_SDR_a"/>
    <property type="match status" value="1"/>
</dbReference>
<dbReference type="Gene3D" id="3.40.50.720">
    <property type="entry name" value="NAD(P)-binding Rossmann-like Domain"/>
    <property type="match status" value="1"/>
</dbReference>
<dbReference type="Gene3D" id="3.90.25.10">
    <property type="entry name" value="UDP-galactose 4-epimerase, domain 1"/>
    <property type="match status" value="1"/>
</dbReference>
<dbReference type="InterPro" id="IPR036291">
    <property type="entry name" value="NAD(P)-bd_dom_sf"/>
</dbReference>
<dbReference type="InterPro" id="IPR008030">
    <property type="entry name" value="NmrA-like"/>
</dbReference>
<dbReference type="InterPro" id="IPR050608">
    <property type="entry name" value="NmrA-type/Isoflavone_red_sf"/>
</dbReference>
<dbReference type="InterPro" id="IPR045312">
    <property type="entry name" value="PCBER-like"/>
</dbReference>
<dbReference type="PANTHER" id="PTHR43349:SF53">
    <property type="entry name" value="ISOFLAVONE REDUCTASE"/>
    <property type="match status" value="1"/>
</dbReference>
<dbReference type="PANTHER" id="PTHR43349">
    <property type="entry name" value="PINORESINOL REDUCTASE-RELATED"/>
    <property type="match status" value="1"/>
</dbReference>
<dbReference type="Pfam" id="PF05368">
    <property type="entry name" value="NmrA"/>
    <property type="match status" value="1"/>
</dbReference>
<dbReference type="SUPFAM" id="SSF51735">
    <property type="entry name" value="NAD(P)-binding Rossmann-fold domains"/>
    <property type="match status" value="1"/>
</dbReference>
<comment type="function">
    <text evidence="3">Reduces achiral isoflavones to chiral isoflavanones during the biosynthesis of chiral pterocarpan phytoalexins (PubMed:28394400). The reduction product is a third isomer, which represents the penultimate intermediate in the synthesis of the phytoalexin (-)-medicarpin, the major phytoalexin in soybean (PubMed:28394400).</text>
</comment>
<comment type="catalytic activity">
    <reaction evidence="3">
        <text>(3R)-vestitone + NADP(+) = 2'-hydroxyformononetin + NADPH + 2 H(+)</text>
        <dbReference type="Rhea" id="RHEA:22560"/>
        <dbReference type="ChEBI" id="CHEBI:15378"/>
        <dbReference type="ChEBI" id="CHEBI:16786"/>
        <dbReference type="ChEBI" id="CHEBI:57783"/>
        <dbReference type="ChEBI" id="CHEBI:58349"/>
        <dbReference type="ChEBI" id="CHEBI:77687"/>
        <dbReference type="EC" id="1.3.1.45"/>
    </reaction>
    <physiologicalReaction direction="right-to-left" evidence="3">
        <dbReference type="Rhea" id="RHEA:22562"/>
    </physiologicalReaction>
</comment>
<comment type="sequence caution" evidence="5">
    <conflict type="erroneous gene model prediction">
        <sequence resource="EMBL-CDS" id="KRH28706"/>
    </conflict>
</comment>
<feature type="chain" id="PRO_0000450382" description="Isoflavone reductase">
    <location>
        <begin position="1"/>
        <end position="318"/>
    </location>
</feature>
<feature type="active site" description="Proton acceptor" evidence="1">
    <location>
        <position position="144"/>
    </location>
</feature>
<feature type="binding site" evidence="1">
    <location>
        <begin position="11"/>
        <end position="17"/>
    </location>
    <ligand>
        <name>NADP(+)</name>
        <dbReference type="ChEBI" id="CHEBI:58349"/>
    </ligand>
</feature>
<feature type="binding site" evidence="2">
    <location>
        <position position="36"/>
    </location>
    <ligand>
        <name>NADP(+)</name>
        <dbReference type="ChEBI" id="CHEBI:58349"/>
    </ligand>
</feature>
<feature type="binding site" evidence="2">
    <location>
        <position position="44"/>
    </location>
    <ligand>
        <name>NADP(+)</name>
        <dbReference type="ChEBI" id="CHEBI:58349"/>
    </ligand>
</feature>
<feature type="binding site" evidence="2">
    <location>
        <position position="148"/>
    </location>
    <ligand>
        <name>NADP(+)</name>
        <dbReference type="ChEBI" id="CHEBI:58349"/>
    </ligand>
</feature>
<organism>
    <name type="scientific">Glycine max</name>
    <name type="common">Soybean</name>
    <name type="synonym">Glycine hispida</name>
    <dbReference type="NCBI Taxonomy" id="3847"/>
    <lineage>
        <taxon>Eukaryota</taxon>
        <taxon>Viridiplantae</taxon>
        <taxon>Streptophyta</taxon>
        <taxon>Embryophyta</taxon>
        <taxon>Tracheophyta</taxon>
        <taxon>Spermatophyta</taxon>
        <taxon>Magnoliopsida</taxon>
        <taxon>eudicotyledons</taxon>
        <taxon>Gunneridae</taxon>
        <taxon>Pentapetalae</taxon>
        <taxon>rosids</taxon>
        <taxon>fabids</taxon>
        <taxon>Fabales</taxon>
        <taxon>Fabaceae</taxon>
        <taxon>Papilionoideae</taxon>
        <taxon>50 kb inversion clade</taxon>
        <taxon>NPAAA clade</taxon>
        <taxon>indigoferoid/millettioid clade</taxon>
        <taxon>Phaseoleae</taxon>
        <taxon>Glycine</taxon>
        <taxon>Glycine subgen. Soja</taxon>
    </lineage>
</organism>
<accession>I1LHU6</accession>
<accession>I1LHU8</accession>
<sequence length="318" mass="35523">MAGKDRILILGPTGAIGRHIVWASVKAGNPTFVLVRNTPGSNNRVNLVKAANPETKEELIESFKNSGVNLIQGDMNDHESLVNAIKQVDVVICAFGRLLIEDQLKIIAAIKEAGNVKRFFPSEFGLDVDRHDSVDPVREVFEEKARIRRIIEAEGIPYTYLCCHAFTGYFLRNLAQIDITVPPRDKVFILGDGNVKGAFVTEADVGTLTIEAANDPNALNKTVHIRLPKNYLTINEIISLWENKIGKTLEKTYVSEEKVLKDIKEASFPNNYLLALYHSQQIKGDAVYEIDTAKDLEASEAYPNVEYTTVDEYLNQFV</sequence>
<gene>
    <name evidence="4" type="primary">IFR</name>
    <name evidence="6" type="ORF">GLYMA_11G070500</name>
</gene>
<evidence type="ECO:0000250" key="1">
    <source>
        <dbReference type="UniProtKB" id="P52575"/>
    </source>
</evidence>
<evidence type="ECO:0000250" key="2">
    <source>
        <dbReference type="UniProtKB" id="Q9LD14"/>
    </source>
</evidence>
<evidence type="ECO:0000269" key="3">
    <source>
    </source>
</evidence>
<evidence type="ECO:0000303" key="4">
    <source>
    </source>
</evidence>
<evidence type="ECO:0000305" key="5"/>
<evidence type="ECO:0000312" key="6">
    <source>
        <dbReference type="EMBL" id="KRH28705.1"/>
    </source>
</evidence>